<dbReference type="EMBL" id="CP001182">
    <property type="protein sequence ID" value="ACJ42335.1"/>
    <property type="molecule type" value="Genomic_DNA"/>
</dbReference>
<dbReference type="RefSeq" id="WP_000578663.1">
    <property type="nucleotide sequence ID" value="NC_011586.2"/>
</dbReference>
<dbReference type="SMR" id="B7I5A8"/>
<dbReference type="GeneID" id="92894860"/>
<dbReference type="KEGG" id="abn:AB57_2994"/>
<dbReference type="HOGENOM" id="CLU_087936_0_0_6"/>
<dbReference type="Proteomes" id="UP000007094">
    <property type="component" value="Chromosome"/>
</dbReference>
<dbReference type="GO" id="GO:0005737">
    <property type="term" value="C:cytoplasm"/>
    <property type="evidence" value="ECO:0007669"/>
    <property type="project" value="UniProtKB-SubCell"/>
</dbReference>
<dbReference type="GO" id="GO:0009379">
    <property type="term" value="C:Holliday junction helicase complex"/>
    <property type="evidence" value="ECO:0007669"/>
    <property type="project" value="InterPro"/>
</dbReference>
<dbReference type="GO" id="GO:0048476">
    <property type="term" value="C:Holliday junction resolvase complex"/>
    <property type="evidence" value="ECO:0007669"/>
    <property type="project" value="UniProtKB-UniRule"/>
</dbReference>
<dbReference type="GO" id="GO:0005524">
    <property type="term" value="F:ATP binding"/>
    <property type="evidence" value="ECO:0007669"/>
    <property type="project" value="InterPro"/>
</dbReference>
<dbReference type="GO" id="GO:0000400">
    <property type="term" value="F:four-way junction DNA binding"/>
    <property type="evidence" value="ECO:0007669"/>
    <property type="project" value="UniProtKB-UniRule"/>
</dbReference>
<dbReference type="GO" id="GO:0009378">
    <property type="term" value="F:four-way junction helicase activity"/>
    <property type="evidence" value="ECO:0007669"/>
    <property type="project" value="InterPro"/>
</dbReference>
<dbReference type="GO" id="GO:0006310">
    <property type="term" value="P:DNA recombination"/>
    <property type="evidence" value="ECO:0007669"/>
    <property type="project" value="UniProtKB-UniRule"/>
</dbReference>
<dbReference type="GO" id="GO:0006281">
    <property type="term" value="P:DNA repair"/>
    <property type="evidence" value="ECO:0007669"/>
    <property type="project" value="UniProtKB-UniRule"/>
</dbReference>
<dbReference type="Gene3D" id="1.10.150.20">
    <property type="entry name" value="5' to 3' exonuclease, C-terminal subdomain"/>
    <property type="match status" value="1"/>
</dbReference>
<dbReference type="Gene3D" id="1.10.8.10">
    <property type="entry name" value="DNA helicase RuvA subunit, C-terminal domain"/>
    <property type="match status" value="1"/>
</dbReference>
<dbReference type="Gene3D" id="2.40.50.140">
    <property type="entry name" value="Nucleic acid-binding proteins"/>
    <property type="match status" value="1"/>
</dbReference>
<dbReference type="HAMAP" id="MF_00031">
    <property type="entry name" value="DNA_HJ_migration_RuvA"/>
    <property type="match status" value="1"/>
</dbReference>
<dbReference type="InterPro" id="IPR013849">
    <property type="entry name" value="DNA_helicase_Holl-junc_RuvA_I"/>
</dbReference>
<dbReference type="InterPro" id="IPR003583">
    <property type="entry name" value="Hlx-hairpin-Hlx_DNA-bd_motif"/>
</dbReference>
<dbReference type="InterPro" id="IPR012340">
    <property type="entry name" value="NA-bd_OB-fold"/>
</dbReference>
<dbReference type="InterPro" id="IPR000085">
    <property type="entry name" value="RuvA"/>
</dbReference>
<dbReference type="InterPro" id="IPR010994">
    <property type="entry name" value="RuvA_2-like"/>
</dbReference>
<dbReference type="InterPro" id="IPR011114">
    <property type="entry name" value="RuvA_C"/>
</dbReference>
<dbReference type="InterPro" id="IPR036267">
    <property type="entry name" value="RuvA_C_sf"/>
</dbReference>
<dbReference type="NCBIfam" id="TIGR00084">
    <property type="entry name" value="ruvA"/>
    <property type="match status" value="1"/>
</dbReference>
<dbReference type="Pfam" id="PF14520">
    <property type="entry name" value="HHH_5"/>
    <property type="match status" value="1"/>
</dbReference>
<dbReference type="Pfam" id="PF07499">
    <property type="entry name" value="RuvA_C"/>
    <property type="match status" value="1"/>
</dbReference>
<dbReference type="Pfam" id="PF01330">
    <property type="entry name" value="RuvA_N"/>
    <property type="match status" value="1"/>
</dbReference>
<dbReference type="SMART" id="SM00278">
    <property type="entry name" value="HhH1"/>
    <property type="match status" value="2"/>
</dbReference>
<dbReference type="SUPFAM" id="SSF46929">
    <property type="entry name" value="DNA helicase RuvA subunit, C-terminal domain"/>
    <property type="match status" value="1"/>
</dbReference>
<dbReference type="SUPFAM" id="SSF50249">
    <property type="entry name" value="Nucleic acid-binding proteins"/>
    <property type="match status" value="1"/>
</dbReference>
<dbReference type="SUPFAM" id="SSF47781">
    <property type="entry name" value="RuvA domain 2-like"/>
    <property type="match status" value="1"/>
</dbReference>
<gene>
    <name evidence="1" type="primary">ruvA</name>
    <name type="ordered locus">AB57_2994</name>
</gene>
<proteinExistence type="inferred from homology"/>
<accession>B7I5A8</accession>
<reference key="1">
    <citation type="journal article" date="2008" name="J. Bacteriol.">
        <title>Comparative genome sequence analysis of multidrug-resistant Acinetobacter baumannii.</title>
        <authorList>
            <person name="Adams M.D."/>
            <person name="Goglin K."/>
            <person name="Molyneaux N."/>
            <person name="Hujer K.M."/>
            <person name="Lavender H."/>
            <person name="Jamison J.J."/>
            <person name="MacDonald I.J."/>
            <person name="Martin K.M."/>
            <person name="Russo T."/>
            <person name="Campagnari A.A."/>
            <person name="Hujer A.M."/>
            <person name="Bonomo R.A."/>
            <person name="Gill S.R."/>
        </authorList>
    </citation>
    <scope>NUCLEOTIDE SEQUENCE [LARGE SCALE GENOMIC DNA]</scope>
    <source>
        <strain>AB0057</strain>
    </source>
</reference>
<organism>
    <name type="scientific">Acinetobacter baumannii (strain AB0057)</name>
    <dbReference type="NCBI Taxonomy" id="480119"/>
    <lineage>
        <taxon>Bacteria</taxon>
        <taxon>Pseudomonadati</taxon>
        <taxon>Pseudomonadota</taxon>
        <taxon>Gammaproteobacteria</taxon>
        <taxon>Moraxellales</taxon>
        <taxon>Moraxellaceae</taxon>
        <taxon>Acinetobacter</taxon>
        <taxon>Acinetobacter calcoaceticus/baumannii complex</taxon>
    </lineage>
</organism>
<sequence length="199" mass="21527">MIGCLIGEVFALEAPTVLLNVNGVGYEIDTPLSTFCQLQKGQKVTLWTHLVVREDAQQLYGFSDAQEKTIFRTLLKVNGVGPKMALGILSTLSVELLVHTIEHDDVNTLVKVPGVGKKTAERLMIELRDRFKTLAQGTSSAAALPQIQFVSNSPVAEAEAALQSLGYKPLEAQKAVAAVKADYTESADIIRAALKSMMK</sequence>
<name>RUVA_ACIB5</name>
<feature type="chain" id="PRO_1000116444" description="Holliday junction branch migration complex subunit RuvA">
    <location>
        <begin position="1"/>
        <end position="199"/>
    </location>
</feature>
<feature type="region of interest" description="Domain I" evidence="1">
    <location>
        <begin position="1"/>
        <end position="63"/>
    </location>
</feature>
<feature type="region of interest" description="Domain II" evidence="1">
    <location>
        <begin position="64"/>
        <end position="142"/>
    </location>
</feature>
<feature type="region of interest" description="Flexible linker" evidence="1">
    <location>
        <begin position="143"/>
        <end position="150"/>
    </location>
</feature>
<feature type="region of interest" description="Domain III" evidence="1">
    <location>
        <begin position="150"/>
        <end position="199"/>
    </location>
</feature>
<protein>
    <recommendedName>
        <fullName evidence="1">Holliday junction branch migration complex subunit RuvA</fullName>
    </recommendedName>
</protein>
<evidence type="ECO:0000255" key="1">
    <source>
        <dbReference type="HAMAP-Rule" id="MF_00031"/>
    </source>
</evidence>
<keyword id="KW-0963">Cytoplasm</keyword>
<keyword id="KW-0227">DNA damage</keyword>
<keyword id="KW-0233">DNA recombination</keyword>
<keyword id="KW-0234">DNA repair</keyword>
<keyword id="KW-0238">DNA-binding</keyword>
<comment type="function">
    <text evidence="1">The RuvA-RuvB-RuvC complex processes Holliday junction (HJ) DNA during genetic recombination and DNA repair, while the RuvA-RuvB complex plays an important role in the rescue of blocked DNA replication forks via replication fork reversal (RFR). RuvA specifically binds to HJ cruciform DNA, conferring on it an open structure. The RuvB hexamer acts as an ATP-dependent pump, pulling dsDNA into and through the RuvAB complex. HJ branch migration allows RuvC to scan DNA until it finds its consensus sequence, where it cleaves and resolves the cruciform DNA.</text>
</comment>
<comment type="subunit">
    <text evidence="1">Homotetramer. Forms an RuvA(8)-RuvB(12)-Holliday junction (HJ) complex. HJ DNA is sandwiched between 2 RuvA tetramers; dsDNA enters through RuvA and exits via RuvB. An RuvB hexamer assembles on each DNA strand where it exits the tetramer. Each RuvB hexamer is contacted by two RuvA subunits (via domain III) on 2 adjacent RuvB subunits; this complex drives branch migration. In the full resolvosome a probable DNA-RuvA(4)-RuvB(12)-RuvC(2) complex forms which resolves the HJ.</text>
</comment>
<comment type="subcellular location">
    <subcellularLocation>
        <location evidence="1">Cytoplasm</location>
    </subcellularLocation>
</comment>
<comment type="domain">
    <text evidence="1">Has three domains with a flexible linker between the domains II and III and assumes an 'L' shape. Domain III is highly mobile and contacts RuvB.</text>
</comment>
<comment type="similarity">
    <text evidence="1">Belongs to the RuvA family.</text>
</comment>